<evidence type="ECO:0000255" key="1"/>
<evidence type="ECO:0000255" key="2">
    <source>
        <dbReference type="PROSITE-ProRule" id="PRU00544"/>
    </source>
</evidence>
<evidence type="ECO:0000305" key="3"/>
<accession>Q6APL9</accession>
<comment type="subcellular location">
    <subcellularLocation>
        <location evidence="3">Cell membrane</location>
        <topology evidence="3">Multi-pass membrane protein</topology>
    </subcellularLocation>
</comment>
<comment type="similarity">
    <text evidence="3">Belongs to the AAE transporter (TC 2.A.81) family.</text>
</comment>
<keyword id="KW-1003">Cell membrane</keyword>
<keyword id="KW-0472">Membrane</keyword>
<keyword id="KW-1185">Reference proteome</keyword>
<keyword id="KW-0677">Repeat</keyword>
<keyword id="KW-0812">Transmembrane</keyword>
<keyword id="KW-1133">Transmembrane helix</keyword>
<keyword id="KW-0813">Transport</keyword>
<gene>
    <name type="ordered locus">DP0976</name>
</gene>
<proteinExistence type="inferred from homology"/>
<name>Y976_DESPS</name>
<dbReference type="EMBL" id="CR522870">
    <property type="protein sequence ID" value="CAG35705.1"/>
    <property type="molecule type" value="Genomic_DNA"/>
</dbReference>
<dbReference type="SMR" id="Q6APL9"/>
<dbReference type="STRING" id="177439.DP0976"/>
<dbReference type="KEGG" id="dps:DP0976"/>
<dbReference type="eggNOG" id="COG0569">
    <property type="taxonomic scope" value="Bacteria"/>
</dbReference>
<dbReference type="eggNOG" id="COG2985">
    <property type="taxonomic scope" value="Bacteria"/>
</dbReference>
<dbReference type="HOGENOM" id="CLU_035023_3_0_7"/>
<dbReference type="OrthoDB" id="9155749at2"/>
<dbReference type="Proteomes" id="UP000000602">
    <property type="component" value="Chromosome"/>
</dbReference>
<dbReference type="GO" id="GO:0005886">
    <property type="term" value="C:plasma membrane"/>
    <property type="evidence" value="ECO:0007669"/>
    <property type="project" value="UniProtKB-SubCell"/>
</dbReference>
<dbReference type="GO" id="GO:0008324">
    <property type="term" value="F:monoatomic cation transmembrane transporter activity"/>
    <property type="evidence" value="ECO:0007669"/>
    <property type="project" value="InterPro"/>
</dbReference>
<dbReference type="GO" id="GO:0006813">
    <property type="term" value="P:potassium ion transport"/>
    <property type="evidence" value="ECO:0007669"/>
    <property type="project" value="InterPro"/>
</dbReference>
<dbReference type="Gene3D" id="3.30.70.1450">
    <property type="entry name" value="Regulator of K+ conductance, C-terminal domain"/>
    <property type="match status" value="2"/>
</dbReference>
<dbReference type="InterPro" id="IPR050144">
    <property type="entry name" value="AAE_transporter"/>
</dbReference>
<dbReference type="InterPro" id="IPR036259">
    <property type="entry name" value="MFS_trans_sf"/>
</dbReference>
<dbReference type="InterPro" id="IPR006037">
    <property type="entry name" value="RCK_C"/>
</dbReference>
<dbReference type="InterPro" id="IPR036721">
    <property type="entry name" value="RCK_C_sf"/>
</dbReference>
<dbReference type="InterPro" id="IPR006512">
    <property type="entry name" value="YidE_YbjL"/>
</dbReference>
<dbReference type="NCBIfam" id="TIGR01625">
    <property type="entry name" value="YidE_YbjL_dupl"/>
    <property type="match status" value="2"/>
</dbReference>
<dbReference type="PANTHER" id="PTHR30445">
    <property type="entry name" value="K(+)_H(+) ANTIPORTER SUBUNIT KHTT"/>
    <property type="match status" value="1"/>
</dbReference>
<dbReference type="PANTHER" id="PTHR30445:SF3">
    <property type="entry name" value="TRANSPORT PROTEIN YIDE-RELATED"/>
    <property type="match status" value="1"/>
</dbReference>
<dbReference type="Pfam" id="PF06826">
    <property type="entry name" value="Asp-Al_Ex"/>
    <property type="match status" value="2"/>
</dbReference>
<dbReference type="Pfam" id="PF02080">
    <property type="entry name" value="TrkA_C"/>
    <property type="match status" value="2"/>
</dbReference>
<dbReference type="SUPFAM" id="SSF103473">
    <property type="entry name" value="MFS general substrate transporter"/>
    <property type="match status" value="1"/>
</dbReference>
<dbReference type="SUPFAM" id="SSF116726">
    <property type="entry name" value="TrkA C-terminal domain-like"/>
    <property type="match status" value="2"/>
</dbReference>
<dbReference type="PROSITE" id="PS51202">
    <property type="entry name" value="RCK_C"/>
    <property type="match status" value="2"/>
</dbReference>
<sequence>MDKENKMDILNNQIFLLLLITLIGMTIGKINIKNFSLDSSAIIFVGLFFGHFGYTLPKTFQTLGLVLFIYSIGLQAGPGFFFSLRQRGLKLSLGTVAIIGIGFLTTLATTYLFHFSAGTSAGIFTGALTSTPGLAVAVEIAGGQNAPAAYGVTYFFGIVGVIVFIQIIPKILNITVKDEEQALNKERDKTHKPLHFMHLELTNLNLVDRQVKHLNLKSISPVIITRLLRKNGTEPILVGGQTILQAGDHLRITGTKDDLEMMQMYLGTPVDQDIEFERVLSGEYITVSNKDICGMSLKQLNCHEVFNVQLSRISRNGIELPAGPNLRLHMGDTIHAVGSKQSLENIKKIFGNSIKDSYNFNILPIFTGLFLGFILGKIPLYIPFSGIFYLGTTGGVLIAGLFLSNIYKTGPLIWAIPSNANSFIREMGLVLFMATIGTQTGTSILATLRHEGLQLSLAGILVTTVPLISSVFICKHLLKLPFLSMLGVITGAMTSTPGLATMAKISKTPYATSSYATVYPVALISMIIYTKLLIFIVERFF</sequence>
<protein>
    <recommendedName>
        <fullName>Uncharacterized transporter DP0976</fullName>
    </recommendedName>
</protein>
<organism>
    <name type="scientific">Desulfotalea psychrophila (strain LSv54 / DSM 12343)</name>
    <dbReference type="NCBI Taxonomy" id="177439"/>
    <lineage>
        <taxon>Bacteria</taxon>
        <taxon>Pseudomonadati</taxon>
        <taxon>Thermodesulfobacteriota</taxon>
        <taxon>Desulfobulbia</taxon>
        <taxon>Desulfobulbales</taxon>
        <taxon>Desulfocapsaceae</taxon>
        <taxon>Desulfotalea</taxon>
    </lineage>
</organism>
<reference key="1">
    <citation type="journal article" date="2004" name="Environ. Microbiol.">
        <title>The genome of Desulfotalea psychrophila, a sulfate-reducing bacterium from permanently cold Arctic sediments.</title>
        <authorList>
            <person name="Rabus R."/>
            <person name="Ruepp A."/>
            <person name="Frickey T."/>
            <person name="Rattei T."/>
            <person name="Fartmann B."/>
            <person name="Stark M."/>
            <person name="Bauer M."/>
            <person name="Zibat A."/>
            <person name="Lombardot T."/>
            <person name="Becker I."/>
            <person name="Amann J."/>
            <person name="Gellner K."/>
            <person name="Teeling H."/>
            <person name="Leuschner W.D."/>
            <person name="Gloeckner F.-O."/>
            <person name="Lupas A.N."/>
            <person name="Amann R."/>
            <person name="Klenk H.-P."/>
        </authorList>
    </citation>
    <scope>NUCLEOTIDE SEQUENCE [LARGE SCALE GENOMIC DNA]</scope>
    <source>
        <strain>DSM 12343 / LSv54</strain>
    </source>
</reference>
<feature type="chain" id="PRO_0000208772" description="Uncharacterized transporter DP0976">
    <location>
        <begin position="1"/>
        <end position="541"/>
    </location>
</feature>
<feature type="transmembrane region" description="Helical" evidence="1">
    <location>
        <begin position="10"/>
        <end position="32"/>
    </location>
</feature>
<feature type="transmembrane region" description="Helical" evidence="1">
    <location>
        <begin position="39"/>
        <end position="57"/>
    </location>
</feature>
<feature type="transmembrane region" description="Helical" evidence="1">
    <location>
        <begin position="62"/>
        <end position="84"/>
    </location>
</feature>
<feature type="transmembrane region" description="Helical" evidence="1">
    <location>
        <begin position="91"/>
        <end position="113"/>
    </location>
</feature>
<feature type="transmembrane region" description="Helical" evidence="1">
    <location>
        <begin position="146"/>
        <end position="168"/>
    </location>
</feature>
<feature type="transmembrane region" description="Helical" evidence="1">
    <location>
        <begin position="357"/>
        <end position="375"/>
    </location>
</feature>
<feature type="transmembrane region" description="Helical" evidence="1">
    <location>
        <begin position="385"/>
        <end position="407"/>
    </location>
</feature>
<feature type="transmembrane region" description="Helical" evidence="1">
    <location>
        <begin position="428"/>
        <end position="447"/>
    </location>
</feature>
<feature type="transmembrane region" description="Helical" evidence="1">
    <location>
        <begin position="452"/>
        <end position="474"/>
    </location>
</feature>
<feature type="transmembrane region" description="Helical" evidence="1">
    <location>
        <begin position="481"/>
        <end position="500"/>
    </location>
</feature>
<feature type="transmembrane region" description="Helical" evidence="1">
    <location>
        <begin position="515"/>
        <end position="537"/>
    </location>
</feature>
<feature type="domain" description="RCK C-terminal 1" evidence="2">
    <location>
        <begin position="183"/>
        <end position="260"/>
    </location>
</feature>
<feature type="domain" description="RCK C-terminal 2" evidence="2">
    <location>
        <begin position="268"/>
        <end position="352"/>
    </location>
</feature>